<comment type="catalytic activity">
    <reaction evidence="1">
        <text>beta-D-fructose 1,6-bisphosphate + H2O = beta-D-fructose 6-phosphate + phosphate</text>
        <dbReference type="Rhea" id="RHEA:11064"/>
        <dbReference type="ChEBI" id="CHEBI:15377"/>
        <dbReference type="ChEBI" id="CHEBI:32966"/>
        <dbReference type="ChEBI" id="CHEBI:43474"/>
        <dbReference type="ChEBI" id="CHEBI:57634"/>
        <dbReference type="EC" id="3.1.3.11"/>
    </reaction>
</comment>
<comment type="cofactor">
    <cofactor evidence="1">
        <name>Mg(2+)</name>
        <dbReference type="ChEBI" id="CHEBI:18420"/>
    </cofactor>
    <text evidence="1">Binds 2 magnesium ions per subunit.</text>
</comment>
<comment type="pathway">
    <text evidence="1">Carbohydrate biosynthesis; gluconeogenesis.</text>
</comment>
<comment type="subunit">
    <text evidence="1">Homotetramer.</text>
</comment>
<comment type="subcellular location">
    <subcellularLocation>
        <location evidence="1">Cytoplasm</location>
    </subcellularLocation>
</comment>
<comment type="similarity">
    <text evidence="1">Belongs to the FBPase class 1 family.</text>
</comment>
<evidence type="ECO:0000255" key="1">
    <source>
        <dbReference type="HAMAP-Rule" id="MF_01855"/>
    </source>
</evidence>
<accession>Q13QU8</accession>
<keyword id="KW-0119">Carbohydrate metabolism</keyword>
<keyword id="KW-0963">Cytoplasm</keyword>
<keyword id="KW-0378">Hydrolase</keyword>
<keyword id="KW-0460">Magnesium</keyword>
<keyword id="KW-0479">Metal-binding</keyword>
<keyword id="KW-1185">Reference proteome</keyword>
<sequence length="378" mass="41346">MQDGRTTLSKFLIDTLDRQPCSTETARNAGLSALLIDVAAAIKSISAMLTKGALGGNYGSAQSINTHGEEQKKLDVATNEIFVQQCEWDGLLAAMVSEEMESVYAIPPGYPRGDYLLAFDPLDGSSNIDINGVVGSIFSVLRNGEGNGNANEKNGSDPRGTVGESAFLRPGCEQVAAGYAVYGPSTMLVLSVGNGTHGFTLEREIGNFVLTHSNIRIPEDTVEFAINASNERFWEPPVRRYVQECKDGRSGCRASDFNMRWIASMVAEVHRILMRGGVFMYPRDSKTPAMEGRLRLLYEANPMSFLVEQAGGLSITGRERILDVVPRALHGRVPVILGSKHEVERIGRYHGEYDRGEDQPFTSPLFSRRSLFLPGFTA</sequence>
<dbReference type="EC" id="3.1.3.11" evidence="1"/>
<dbReference type="EMBL" id="CP000271">
    <property type="protein sequence ID" value="ABE33541.1"/>
    <property type="molecule type" value="Genomic_DNA"/>
</dbReference>
<dbReference type="RefSeq" id="WP_011490906.1">
    <property type="nucleotide sequence ID" value="NC_007952.1"/>
</dbReference>
<dbReference type="SMR" id="Q13QU8"/>
<dbReference type="STRING" id="266265.Bxe_B2450"/>
<dbReference type="KEGG" id="bxb:DR64_4778"/>
<dbReference type="KEGG" id="bxe:Bxe_B2450"/>
<dbReference type="PATRIC" id="fig|266265.5.peg.5259"/>
<dbReference type="eggNOG" id="COG0158">
    <property type="taxonomic scope" value="Bacteria"/>
</dbReference>
<dbReference type="OrthoDB" id="9806756at2"/>
<dbReference type="UniPathway" id="UPA00138"/>
<dbReference type="Proteomes" id="UP000001817">
    <property type="component" value="Chromosome 2"/>
</dbReference>
<dbReference type="GO" id="GO:0005829">
    <property type="term" value="C:cytosol"/>
    <property type="evidence" value="ECO:0007669"/>
    <property type="project" value="TreeGrafter"/>
</dbReference>
<dbReference type="GO" id="GO:0042132">
    <property type="term" value="F:fructose 1,6-bisphosphate 1-phosphatase activity"/>
    <property type="evidence" value="ECO:0007669"/>
    <property type="project" value="UniProtKB-UniRule"/>
</dbReference>
<dbReference type="GO" id="GO:0000287">
    <property type="term" value="F:magnesium ion binding"/>
    <property type="evidence" value="ECO:0007669"/>
    <property type="project" value="UniProtKB-UniRule"/>
</dbReference>
<dbReference type="GO" id="GO:0030388">
    <property type="term" value="P:fructose 1,6-bisphosphate metabolic process"/>
    <property type="evidence" value="ECO:0007669"/>
    <property type="project" value="TreeGrafter"/>
</dbReference>
<dbReference type="GO" id="GO:0006002">
    <property type="term" value="P:fructose 6-phosphate metabolic process"/>
    <property type="evidence" value="ECO:0007669"/>
    <property type="project" value="TreeGrafter"/>
</dbReference>
<dbReference type="GO" id="GO:0006000">
    <property type="term" value="P:fructose metabolic process"/>
    <property type="evidence" value="ECO:0007669"/>
    <property type="project" value="TreeGrafter"/>
</dbReference>
<dbReference type="GO" id="GO:0006094">
    <property type="term" value="P:gluconeogenesis"/>
    <property type="evidence" value="ECO:0007669"/>
    <property type="project" value="UniProtKB-UniRule"/>
</dbReference>
<dbReference type="GO" id="GO:0005986">
    <property type="term" value="P:sucrose biosynthetic process"/>
    <property type="evidence" value="ECO:0007669"/>
    <property type="project" value="TreeGrafter"/>
</dbReference>
<dbReference type="CDD" id="cd00354">
    <property type="entry name" value="FBPase"/>
    <property type="match status" value="1"/>
</dbReference>
<dbReference type="FunFam" id="3.40.190.80:FF:000011">
    <property type="entry name" value="Fructose-1,6-bisphosphatase class 1"/>
    <property type="match status" value="1"/>
</dbReference>
<dbReference type="Gene3D" id="3.40.190.80">
    <property type="match status" value="1"/>
</dbReference>
<dbReference type="Gene3D" id="3.30.540.10">
    <property type="entry name" value="Fructose-1,6-Bisphosphatase, subunit A, domain 1"/>
    <property type="match status" value="1"/>
</dbReference>
<dbReference type="HAMAP" id="MF_01855">
    <property type="entry name" value="FBPase_class1"/>
    <property type="match status" value="1"/>
</dbReference>
<dbReference type="InterPro" id="IPR044015">
    <property type="entry name" value="FBPase_C_dom"/>
</dbReference>
<dbReference type="InterPro" id="IPR000146">
    <property type="entry name" value="FBPase_class-1"/>
</dbReference>
<dbReference type="InterPro" id="IPR033391">
    <property type="entry name" value="FBPase_N"/>
</dbReference>
<dbReference type="InterPro" id="IPR028343">
    <property type="entry name" value="FBPtase"/>
</dbReference>
<dbReference type="InterPro" id="IPR020548">
    <property type="entry name" value="Fructose_bisphosphatase_AS"/>
</dbReference>
<dbReference type="NCBIfam" id="NF006779">
    <property type="entry name" value="PRK09293.1-3"/>
    <property type="match status" value="1"/>
</dbReference>
<dbReference type="NCBIfam" id="NF006780">
    <property type="entry name" value="PRK09293.1-4"/>
    <property type="match status" value="1"/>
</dbReference>
<dbReference type="PANTHER" id="PTHR11556">
    <property type="entry name" value="FRUCTOSE-1,6-BISPHOSPHATASE-RELATED"/>
    <property type="match status" value="1"/>
</dbReference>
<dbReference type="PANTHER" id="PTHR11556:SF35">
    <property type="entry name" value="SEDOHEPTULOSE-1,7-BISPHOSPHATASE, CHLOROPLASTIC"/>
    <property type="match status" value="1"/>
</dbReference>
<dbReference type="Pfam" id="PF00316">
    <property type="entry name" value="FBPase"/>
    <property type="match status" value="1"/>
</dbReference>
<dbReference type="Pfam" id="PF18913">
    <property type="entry name" value="FBPase_C"/>
    <property type="match status" value="1"/>
</dbReference>
<dbReference type="PIRSF" id="PIRSF500210">
    <property type="entry name" value="FBPtase"/>
    <property type="match status" value="1"/>
</dbReference>
<dbReference type="PIRSF" id="PIRSF000904">
    <property type="entry name" value="FBPtase_SBPase"/>
    <property type="match status" value="1"/>
</dbReference>
<dbReference type="PRINTS" id="PR00115">
    <property type="entry name" value="F16BPHPHTASE"/>
</dbReference>
<dbReference type="SUPFAM" id="SSF56655">
    <property type="entry name" value="Carbohydrate phosphatase"/>
    <property type="match status" value="1"/>
</dbReference>
<dbReference type="PROSITE" id="PS00124">
    <property type="entry name" value="FBPASE"/>
    <property type="match status" value="1"/>
</dbReference>
<reference key="1">
    <citation type="journal article" date="2006" name="Proc. Natl. Acad. Sci. U.S.A.">
        <title>Burkholderia xenovorans LB400 harbors a multi-replicon, 9.73-Mbp genome shaped for versatility.</title>
        <authorList>
            <person name="Chain P.S.G."/>
            <person name="Denef V.J."/>
            <person name="Konstantinidis K.T."/>
            <person name="Vergez L.M."/>
            <person name="Agullo L."/>
            <person name="Reyes V.L."/>
            <person name="Hauser L."/>
            <person name="Cordova M."/>
            <person name="Gomez L."/>
            <person name="Gonzalez M."/>
            <person name="Land M."/>
            <person name="Lao V."/>
            <person name="Larimer F."/>
            <person name="LiPuma J.J."/>
            <person name="Mahenthiralingam E."/>
            <person name="Malfatti S.A."/>
            <person name="Marx C.J."/>
            <person name="Parnell J.J."/>
            <person name="Ramette A."/>
            <person name="Richardson P."/>
            <person name="Seeger M."/>
            <person name="Smith D."/>
            <person name="Spilker T."/>
            <person name="Sul W.J."/>
            <person name="Tsoi T.V."/>
            <person name="Ulrich L.E."/>
            <person name="Zhulin I.B."/>
            <person name="Tiedje J.M."/>
        </authorList>
    </citation>
    <scope>NUCLEOTIDE SEQUENCE [LARGE SCALE GENOMIC DNA]</scope>
    <source>
        <strain>LB400</strain>
    </source>
</reference>
<feature type="chain" id="PRO_0000364507" description="Fructose-1,6-bisphosphatase class 1 2">
    <location>
        <begin position="1"/>
        <end position="378"/>
    </location>
</feature>
<feature type="binding site" evidence="1">
    <location>
        <position position="98"/>
    </location>
    <ligand>
        <name>Mg(2+)</name>
        <dbReference type="ChEBI" id="CHEBI:18420"/>
        <label>1</label>
    </ligand>
</feature>
<feature type="binding site" evidence="1">
    <location>
        <position position="120"/>
    </location>
    <ligand>
        <name>Mg(2+)</name>
        <dbReference type="ChEBI" id="CHEBI:18420"/>
        <label>1</label>
    </ligand>
</feature>
<feature type="binding site" evidence="1">
    <location>
        <position position="120"/>
    </location>
    <ligand>
        <name>Mg(2+)</name>
        <dbReference type="ChEBI" id="CHEBI:18420"/>
        <label>2</label>
    </ligand>
</feature>
<feature type="binding site" evidence="1">
    <location>
        <position position="122"/>
    </location>
    <ligand>
        <name>Mg(2+)</name>
        <dbReference type="ChEBI" id="CHEBI:18420"/>
        <label>1</label>
    </ligand>
</feature>
<feature type="binding site" evidence="1">
    <location>
        <begin position="123"/>
        <end position="126"/>
    </location>
    <ligand>
        <name>substrate</name>
    </ligand>
</feature>
<feature type="binding site" evidence="1">
    <location>
        <position position="123"/>
    </location>
    <ligand>
        <name>Mg(2+)</name>
        <dbReference type="ChEBI" id="CHEBI:18420"/>
        <label>2</label>
    </ligand>
</feature>
<feature type="binding site" evidence="1">
    <location>
        <position position="227"/>
    </location>
    <ligand>
        <name>substrate</name>
    </ligand>
</feature>
<feature type="binding site" evidence="1">
    <location>
        <position position="299"/>
    </location>
    <ligand>
        <name>Mg(2+)</name>
        <dbReference type="ChEBI" id="CHEBI:18420"/>
        <label>2</label>
    </ligand>
</feature>
<protein>
    <recommendedName>
        <fullName evidence="1">Fructose-1,6-bisphosphatase class 1 2</fullName>
        <shortName evidence="1">FBPase class 1 2</shortName>
        <ecNumber evidence="1">3.1.3.11</ecNumber>
    </recommendedName>
    <alternativeName>
        <fullName evidence="1">D-fructose-1,6-bisphosphate 1-phosphohydrolase class 1 2</fullName>
    </alternativeName>
</protein>
<organism>
    <name type="scientific">Paraburkholderia xenovorans (strain LB400)</name>
    <dbReference type="NCBI Taxonomy" id="266265"/>
    <lineage>
        <taxon>Bacteria</taxon>
        <taxon>Pseudomonadati</taxon>
        <taxon>Pseudomonadota</taxon>
        <taxon>Betaproteobacteria</taxon>
        <taxon>Burkholderiales</taxon>
        <taxon>Burkholderiaceae</taxon>
        <taxon>Paraburkholderia</taxon>
    </lineage>
</organism>
<gene>
    <name evidence="1" type="primary">fbp2</name>
    <name type="ordered locus">Bxeno_B0573</name>
    <name type="ORF">Bxe_B2450</name>
</gene>
<proteinExistence type="inferred from homology"/>
<name>F16A2_PARXL</name>